<organism>
    <name type="scientific">Rattus norvegicus</name>
    <name type="common">Rat</name>
    <dbReference type="NCBI Taxonomy" id="10116"/>
    <lineage>
        <taxon>Eukaryota</taxon>
        <taxon>Metazoa</taxon>
        <taxon>Chordata</taxon>
        <taxon>Craniata</taxon>
        <taxon>Vertebrata</taxon>
        <taxon>Euteleostomi</taxon>
        <taxon>Mammalia</taxon>
        <taxon>Eutheria</taxon>
        <taxon>Euarchontoglires</taxon>
        <taxon>Glires</taxon>
        <taxon>Rodentia</taxon>
        <taxon>Myomorpha</taxon>
        <taxon>Muroidea</taxon>
        <taxon>Muridae</taxon>
        <taxon>Murinae</taxon>
        <taxon>Rattus</taxon>
    </lineage>
</organism>
<reference key="1">
    <citation type="journal article" date="2000" name="Biochim. Biophys. Acta">
        <title>Cloning and functional expression of the rat alpha(2) subunit of soluble guanylyl cyclase.</title>
        <authorList>
            <person name="Koglin M."/>
            <person name="Behrends S."/>
        </authorList>
    </citation>
    <scope>NUCLEOTIDE SEQUENCE [MRNA]</scope>
    <scope>CATALYTIC ACTIVITY</scope>
    <scope>ACTIVITY REGULATION</scope>
    <scope>FUNCTION</scope>
    <source>
        <strain>Wistar Kyoto</strain>
        <tissue>Aorta</tissue>
    </source>
</reference>
<reference key="2">
    <citation type="submission" date="2002-11" db="EMBL/GenBank/DDBJ databases">
        <title>Rat soluble guanylate cyclase alpha 2 subunit.</title>
        <authorList>
            <person name="Yao Y."/>
            <person name="Yamamoto T."/>
            <person name="Suzuki N."/>
        </authorList>
    </citation>
    <scope>NUCLEOTIDE SEQUENCE [MRNA]</scope>
</reference>
<sequence>MSRRKISSESFSSLGSDYLETSPEEEGECPLSKLCWNGSRSPPGPPGSRAAAMAATPVPAASVAAAAAAVAAGSKRAQRRRRVNLDSLGESISLLTAPSPQTIHMTLKRTLQYYEHQVIGYRDAEKNFHNISNRCSSADHSNKEEIEDVSGILRCTANVLGLKFQEIQERFGEEFFKICFDENERVLRAVGSTLQDFFNGFDALLEHIRTSFGKQATLESPSFLCKELPEGTLKLHYFHPHHTVGFAMLGMIKAAGKRIYHLNVEVEQIENEKFCSDGSTPSNYSCLTFLIKECETTQITKNIPQGTSQIPTDLRISINTFCRTFPFHLMFDPNMVVLQLGEGLRKQLRCDNHKVLKFEDCFEIVSPKVNATFDRVLLRLSTPFVIRTKPEASGTDNEDKVMEIKGQMIHVPESNAILFLGSPCVDKLDELIGRGLHLSDIPIHDATRDVILVGEQAKAQDGLKKRMDKLKATLEKTHQALEEEKKKTVDLLYSIFPGDVAQQLWQRQQVQARKFDDVTMLFSDIVGFTAICAQCTPMQVISMLNELYTRFDHQCGFLDIYKVETIGDAYCVASGLHRKSLCHAKPIALMALKMMELSEEVLTPDGRPIQMRIGIHSGSVLAGVVGVRMPRYCLFGNNVTLASKFESGSHPRRINISPTTYQLLKREDSFTFIPRSREELPDNFPKEIPGVCYFLELRTGPKPPKPSLSSSRIKKVSYNIGTMFLRETSL</sequence>
<feature type="chain" id="PRO_0000074114" description="Guanylate cyclase soluble subunit alpha-2">
    <location>
        <begin position="1"/>
        <end position="730"/>
    </location>
</feature>
<feature type="domain" description="Guanylate cyclase" evidence="2">
    <location>
        <begin position="519"/>
        <end position="646"/>
    </location>
</feature>
<feature type="region of interest" description="Disordered" evidence="3">
    <location>
        <begin position="1"/>
        <end position="53"/>
    </location>
</feature>
<dbReference type="EC" id="4.6.1.2" evidence="5"/>
<dbReference type="EMBL" id="AF109963">
    <property type="protein sequence ID" value="AAD42949.2"/>
    <property type="molecule type" value="mRNA"/>
</dbReference>
<dbReference type="EMBL" id="AB096080">
    <property type="protein sequence ID" value="BAC24017.1"/>
    <property type="molecule type" value="mRNA"/>
</dbReference>
<dbReference type="RefSeq" id="NP_076446.1">
    <property type="nucleotide sequence ID" value="NM_023956.2"/>
</dbReference>
<dbReference type="SMR" id="Q9WVI4"/>
<dbReference type="CORUM" id="Q9WVI4"/>
<dbReference type="FunCoup" id="Q9WVI4">
    <property type="interactions" value="1785"/>
</dbReference>
<dbReference type="IntAct" id="Q9WVI4">
    <property type="interactions" value="5"/>
</dbReference>
<dbReference type="MINT" id="Q9WVI4"/>
<dbReference type="STRING" id="10116.ENSRNOP00000040361"/>
<dbReference type="GlyGen" id="Q9WVI4">
    <property type="glycosylation" value="1 site"/>
</dbReference>
<dbReference type="iPTMnet" id="Q9WVI4"/>
<dbReference type="PhosphoSitePlus" id="Q9WVI4"/>
<dbReference type="PaxDb" id="10116-ENSRNOP00000040361"/>
<dbReference type="DNASU" id="66012"/>
<dbReference type="GeneID" id="66012"/>
<dbReference type="KEGG" id="rno:66012"/>
<dbReference type="UCSC" id="RGD:621655">
    <property type="organism name" value="rat"/>
</dbReference>
<dbReference type="AGR" id="RGD:621655"/>
<dbReference type="CTD" id="2977"/>
<dbReference type="RGD" id="621655">
    <property type="gene designation" value="Gucy1a2"/>
</dbReference>
<dbReference type="VEuPathDB" id="HostDB:ENSRNOG00000029876"/>
<dbReference type="eggNOG" id="KOG4171">
    <property type="taxonomic scope" value="Eukaryota"/>
</dbReference>
<dbReference type="HOGENOM" id="CLU_011614_5_0_1"/>
<dbReference type="InParanoid" id="Q9WVI4"/>
<dbReference type="OrthoDB" id="6127067at2759"/>
<dbReference type="PhylomeDB" id="Q9WVI4"/>
<dbReference type="Reactome" id="R-RNO-445355">
    <property type="pathway name" value="Smooth Muscle Contraction"/>
</dbReference>
<dbReference type="PRO" id="PR:Q9WVI4"/>
<dbReference type="Proteomes" id="UP000002494">
    <property type="component" value="Chromosome 8"/>
</dbReference>
<dbReference type="Bgee" id="ENSRNOG00000029876">
    <property type="expression patterns" value="Expressed in testis and 15 other cell types or tissues"/>
</dbReference>
<dbReference type="GO" id="GO:0005829">
    <property type="term" value="C:cytosol"/>
    <property type="evidence" value="ECO:0000304"/>
    <property type="project" value="Reactome"/>
</dbReference>
<dbReference type="GO" id="GO:0008074">
    <property type="term" value="C:guanylate cyclase complex, soluble"/>
    <property type="evidence" value="ECO:0000318"/>
    <property type="project" value="GO_Central"/>
</dbReference>
<dbReference type="GO" id="GO:0005525">
    <property type="term" value="F:GTP binding"/>
    <property type="evidence" value="ECO:0007669"/>
    <property type="project" value="UniProtKB-KW"/>
</dbReference>
<dbReference type="GO" id="GO:0004383">
    <property type="term" value="F:guanylate cyclase activity"/>
    <property type="evidence" value="ECO:0000314"/>
    <property type="project" value="RGD"/>
</dbReference>
<dbReference type="GO" id="GO:0020037">
    <property type="term" value="F:heme binding"/>
    <property type="evidence" value="ECO:0007669"/>
    <property type="project" value="InterPro"/>
</dbReference>
<dbReference type="GO" id="GO:0044877">
    <property type="term" value="F:protein-containing complex binding"/>
    <property type="evidence" value="ECO:0000353"/>
    <property type="project" value="RGD"/>
</dbReference>
<dbReference type="GO" id="GO:0019934">
    <property type="term" value="P:cGMP-mediated signaling"/>
    <property type="evidence" value="ECO:0000318"/>
    <property type="project" value="GO_Central"/>
</dbReference>
<dbReference type="GO" id="GO:0007263">
    <property type="term" value="P:nitric oxide mediated signal transduction"/>
    <property type="evidence" value="ECO:0000266"/>
    <property type="project" value="RGD"/>
</dbReference>
<dbReference type="GO" id="GO:0010750">
    <property type="term" value="P:positive regulation of nitric oxide mediated signal transduction"/>
    <property type="evidence" value="ECO:0000266"/>
    <property type="project" value="RGD"/>
</dbReference>
<dbReference type="GO" id="GO:0070482">
    <property type="term" value="P:response to oxygen levels"/>
    <property type="evidence" value="ECO:0000318"/>
    <property type="project" value="GO_Central"/>
</dbReference>
<dbReference type="CDD" id="cd07302">
    <property type="entry name" value="CHD"/>
    <property type="match status" value="1"/>
</dbReference>
<dbReference type="FunFam" id="3.90.1520.10:FF:000003">
    <property type="entry name" value="Guanylate cyclase soluble subunit alpha-2"/>
    <property type="match status" value="1"/>
</dbReference>
<dbReference type="FunFam" id="3.30.450.260:FF:000002">
    <property type="entry name" value="guanylate cyclase soluble subunit alpha-2"/>
    <property type="match status" value="1"/>
</dbReference>
<dbReference type="FunFam" id="3.30.70.1230:FF:000007">
    <property type="entry name" value="Guanylate cyclase soluble subunit alpha-3"/>
    <property type="match status" value="1"/>
</dbReference>
<dbReference type="Gene3D" id="6.10.250.780">
    <property type="match status" value="1"/>
</dbReference>
<dbReference type="Gene3D" id="3.90.1520.10">
    <property type="entry name" value="H-NOX domain"/>
    <property type="match status" value="1"/>
</dbReference>
<dbReference type="Gene3D" id="3.30.450.260">
    <property type="entry name" value="Haem NO binding associated domain"/>
    <property type="match status" value="1"/>
</dbReference>
<dbReference type="Gene3D" id="3.30.70.1230">
    <property type="entry name" value="Nucleotide cyclase"/>
    <property type="match status" value="1"/>
</dbReference>
<dbReference type="InterPro" id="IPR001054">
    <property type="entry name" value="A/G_cyclase"/>
</dbReference>
<dbReference type="InterPro" id="IPR018297">
    <property type="entry name" value="A/G_cyclase_CS"/>
</dbReference>
<dbReference type="InterPro" id="IPR038158">
    <property type="entry name" value="H-NOX_domain_sf"/>
</dbReference>
<dbReference type="InterPro" id="IPR011644">
    <property type="entry name" value="Heme_NO-bd"/>
</dbReference>
<dbReference type="InterPro" id="IPR011645">
    <property type="entry name" value="HNOB_dom_associated"/>
</dbReference>
<dbReference type="InterPro" id="IPR042463">
    <property type="entry name" value="HNOB_dom_associated_sf"/>
</dbReference>
<dbReference type="InterPro" id="IPR024096">
    <property type="entry name" value="NO_sig/Golgi_transp_ligand-bd"/>
</dbReference>
<dbReference type="InterPro" id="IPR029787">
    <property type="entry name" value="Nucleotide_cyclase"/>
</dbReference>
<dbReference type="PANTHER" id="PTHR45655:SF7">
    <property type="entry name" value="GUANYLATE CYCLASE SOLUBLE SUBUNIT ALPHA-2"/>
    <property type="match status" value="1"/>
</dbReference>
<dbReference type="PANTHER" id="PTHR45655">
    <property type="entry name" value="GUANYLATE CYCLASE SOLUBLE SUBUNIT BETA-2"/>
    <property type="match status" value="1"/>
</dbReference>
<dbReference type="Pfam" id="PF00211">
    <property type="entry name" value="Guanylate_cyc"/>
    <property type="match status" value="1"/>
</dbReference>
<dbReference type="Pfam" id="PF07700">
    <property type="entry name" value="HNOB"/>
    <property type="match status" value="1"/>
</dbReference>
<dbReference type="Pfam" id="PF07701">
    <property type="entry name" value="HNOBA"/>
    <property type="match status" value="1"/>
</dbReference>
<dbReference type="SMART" id="SM00044">
    <property type="entry name" value="CYCc"/>
    <property type="match status" value="1"/>
</dbReference>
<dbReference type="SUPFAM" id="SSF111126">
    <property type="entry name" value="Ligand-binding domain in the NO signalling and Golgi transport"/>
    <property type="match status" value="1"/>
</dbReference>
<dbReference type="SUPFAM" id="SSF55073">
    <property type="entry name" value="Nucleotide cyclase"/>
    <property type="match status" value="1"/>
</dbReference>
<dbReference type="PROSITE" id="PS00452">
    <property type="entry name" value="GUANYLATE_CYCLASE_1"/>
    <property type="match status" value="1"/>
</dbReference>
<dbReference type="PROSITE" id="PS50125">
    <property type="entry name" value="GUANYLATE_CYCLASE_2"/>
    <property type="match status" value="1"/>
</dbReference>
<evidence type="ECO:0000250" key="1"/>
<evidence type="ECO:0000255" key="2">
    <source>
        <dbReference type="PROSITE-ProRule" id="PRU00099"/>
    </source>
</evidence>
<evidence type="ECO:0000256" key="3">
    <source>
        <dbReference type="SAM" id="MobiDB-lite"/>
    </source>
</evidence>
<evidence type="ECO:0000269" key="4">
    <source>
    </source>
</evidence>
<evidence type="ECO:0000305" key="5">
    <source>
    </source>
</evidence>
<proteinExistence type="evidence at protein level"/>
<name>GCYA2_RAT</name>
<accession>Q9WVI4</accession>
<accession>Q54A43</accession>
<gene>
    <name type="primary">Gucy1a2</name>
</gene>
<protein>
    <recommendedName>
        <fullName>Guanylate cyclase soluble subunit alpha-2</fullName>
        <shortName>GCS-alpha-2</shortName>
        <ecNumber evidence="5">4.6.1.2</ecNumber>
    </recommendedName>
</protein>
<comment type="function">
    <text evidence="5">Has guanylyl cyclase on binding to the beta-1 subunit.</text>
</comment>
<comment type="catalytic activity">
    <reaction evidence="5">
        <text>GTP = 3',5'-cyclic GMP + diphosphate</text>
        <dbReference type="Rhea" id="RHEA:13665"/>
        <dbReference type="ChEBI" id="CHEBI:33019"/>
        <dbReference type="ChEBI" id="CHEBI:37565"/>
        <dbReference type="ChEBI" id="CHEBI:57746"/>
        <dbReference type="EC" id="4.6.1.2"/>
    </reaction>
    <physiologicalReaction direction="left-to-right" evidence="5">
        <dbReference type="Rhea" id="RHEA:13666"/>
    </physiologicalReaction>
</comment>
<comment type="activity regulation">
    <text evidence="1 4">Activated by nitric oxide in the presence of magnesium or manganese ions.</text>
</comment>
<comment type="subunit">
    <text evidence="1">Heterodimer of an alpha and a beta chain.</text>
</comment>
<comment type="interaction">
    <interactant intactId="EBI-7665590">
        <id>Q9WVI4</id>
    </interactant>
    <interactant intactId="EBI-375655">
        <id>P31016</id>
        <label>Dlg4</label>
    </interactant>
    <organismsDiffer>false</organismsDiffer>
    <experiments>7</experiments>
</comment>
<comment type="interaction">
    <interactant intactId="EBI-7665590">
        <id>Q9WVI4</id>
    </interactant>
    <interactant intactId="EBI-300895">
        <id>Q62108</id>
        <label>Dlg4</label>
    </interactant>
    <organismsDiffer>true</organismsDiffer>
    <experiments>3</experiments>
</comment>
<comment type="subcellular location">
    <subcellularLocation>
        <location evidence="1">Cytoplasm</location>
    </subcellularLocation>
</comment>
<comment type="miscellaneous">
    <text>There are two types of guanylate cyclases: soluble forms and membrane-associated receptor forms.</text>
</comment>
<comment type="similarity">
    <text evidence="2">Belongs to the adenylyl cyclase class-4/guanylyl cyclase family.</text>
</comment>
<keyword id="KW-0141">cGMP biosynthesis</keyword>
<keyword id="KW-0963">Cytoplasm</keyword>
<keyword id="KW-0342">GTP-binding</keyword>
<keyword id="KW-0456">Lyase</keyword>
<keyword id="KW-0547">Nucleotide-binding</keyword>
<keyword id="KW-1185">Reference proteome</keyword>